<dbReference type="EC" id="2.5.-.-"/>
<dbReference type="EMBL" id="BA000039">
    <property type="protein sequence ID" value="BAC08369.1"/>
    <property type="molecule type" value="Genomic_DNA"/>
</dbReference>
<dbReference type="RefSeq" id="NP_681607.1">
    <property type="nucleotide sequence ID" value="NC_004113.1"/>
</dbReference>
<dbReference type="SMR" id="Q8DKP1"/>
<dbReference type="STRING" id="197221.gene:10747409"/>
<dbReference type="EnsemblBacteria" id="BAC08369">
    <property type="protein sequence ID" value="BAC08369"/>
    <property type="gene ID" value="BAC08369"/>
</dbReference>
<dbReference type="KEGG" id="tel:tlr0818"/>
<dbReference type="PATRIC" id="fig|197221.4.peg.860"/>
<dbReference type="eggNOG" id="COG1899">
    <property type="taxonomic scope" value="Bacteria"/>
</dbReference>
<dbReference type="Proteomes" id="UP000000440">
    <property type="component" value="Chromosome"/>
</dbReference>
<dbReference type="GO" id="GO:0005737">
    <property type="term" value="C:cytoplasm"/>
    <property type="evidence" value="ECO:0007669"/>
    <property type="project" value="TreeGrafter"/>
</dbReference>
<dbReference type="GO" id="GO:0034038">
    <property type="term" value="F:deoxyhypusine synthase activity"/>
    <property type="evidence" value="ECO:0007669"/>
    <property type="project" value="TreeGrafter"/>
</dbReference>
<dbReference type="Gene3D" id="3.40.910.10">
    <property type="entry name" value="Deoxyhypusine synthase"/>
    <property type="match status" value="1"/>
</dbReference>
<dbReference type="HAMAP" id="MF_00640">
    <property type="entry name" value="DHS_like"/>
    <property type="match status" value="1"/>
</dbReference>
<dbReference type="InterPro" id="IPR002773">
    <property type="entry name" value="Deoxyhypusine_synthase"/>
</dbReference>
<dbReference type="InterPro" id="IPR023496">
    <property type="entry name" value="Deoxyhypusine_synthase-like"/>
</dbReference>
<dbReference type="InterPro" id="IPR036982">
    <property type="entry name" value="Deoxyhypusine_synthase_sf"/>
</dbReference>
<dbReference type="InterPro" id="IPR029035">
    <property type="entry name" value="DHS-like_NAD/FAD-binding_dom"/>
</dbReference>
<dbReference type="NCBIfam" id="NF001980">
    <property type="entry name" value="PRK00770.1"/>
    <property type="match status" value="1"/>
</dbReference>
<dbReference type="PANTHER" id="PTHR11703">
    <property type="entry name" value="DEOXYHYPUSINE SYNTHASE"/>
    <property type="match status" value="1"/>
</dbReference>
<dbReference type="PANTHER" id="PTHR11703:SF2">
    <property type="entry name" value="DEOXYHYPUSINE SYNTHASE-LIKE PROTEIN"/>
    <property type="match status" value="1"/>
</dbReference>
<dbReference type="Pfam" id="PF01916">
    <property type="entry name" value="DS"/>
    <property type="match status" value="1"/>
</dbReference>
<dbReference type="SUPFAM" id="SSF52467">
    <property type="entry name" value="DHS-like NAD/FAD-binding domain"/>
    <property type="match status" value="1"/>
</dbReference>
<evidence type="ECO:0000305" key="1"/>
<name>DHSL_THEVB</name>
<gene>
    <name type="ordered locus">tlr0818</name>
</gene>
<keyword id="KW-1185">Reference proteome</keyword>
<keyword id="KW-0808">Transferase</keyword>
<protein>
    <recommendedName>
        <fullName>Deoxyhypusine synthase-like protein</fullName>
        <ecNumber>2.5.-.-</ecNumber>
    </recommendedName>
</protein>
<sequence>MAVPAVEFPWEEQPMSAFATPITPAPIPDNISLTELIDKYFTAYNSARLREICQLLSQRVFKPEVTVGLSLSGAMTPTGLGISALAPLVRAGFVDYIISTGANLYHDIHYALGMDLYAAHPFVDDVQLRKESKIRIYDIIFDYDVLLETDAFLRQVLRSETFQRRMGTAEFHYHLGHYVRELEVQRGQPHSCLLATAYECGVPIYTSSPGDSSIGMNVAAIALEGSKLIIDPAIDVNETAAIAYFAREAAGGKGKSAALIIGGGSPKNFLLQTQPQIHEVLGLEERGHDYFIQITDARPDTGGLSGAVPSEAVSWGKVDPQGLRDTVVCYTDSTIALPILTAYCLNRCQPRPLKRLYDRRGEMVERLQQLYLQAQLQHKVKELPTEAPVATYPCGTPIRRP</sequence>
<organism>
    <name type="scientific">Thermosynechococcus vestitus (strain NIES-2133 / IAM M-273 / BP-1)</name>
    <dbReference type="NCBI Taxonomy" id="197221"/>
    <lineage>
        <taxon>Bacteria</taxon>
        <taxon>Bacillati</taxon>
        <taxon>Cyanobacteriota</taxon>
        <taxon>Cyanophyceae</taxon>
        <taxon>Acaryochloridales</taxon>
        <taxon>Thermosynechococcaceae</taxon>
        <taxon>Thermosynechococcus</taxon>
    </lineage>
</organism>
<accession>Q8DKP1</accession>
<reference key="1">
    <citation type="journal article" date="2002" name="DNA Res.">
        <title>Complete genome structure of the thermophilic cyanobacterium Thermosynechococcus elongatus BP-1.</title>
        <authorList>
            <person name="Nakamura Y."/>
            <person name="Kaneko T."/>
            <person name="Sato S."/>
            <person name="Ikeuchi M."/>
            <person name="Katoh H."/>
            <person name="Sasamoto S."/>
            <person name="Watanabe A."/>
            <person name="Iriguchi M."/>
            <person name="Kawashima K."/>
            <person name="Kimura T."/>
            <person name="Kishida Y."/>
            <person name="Kiyokawa C."/>
            <person name="Kohara M."/>
            <person name="Matsumoto M."/>
            <person name="Matsuno A."/>
            <person name="Nakazaki N."/>
            <person name="Shimpo S."/>
            <person name="Sugimoto M."/>
            <person name="Takeuchi C."/>
            <person name="Yamada M."/>
            <person name="Tabata S."/>
        </authorList>
    </citation>
    <scope>NUCLEOTIDE SEQUENCE [LARGE SCALE GENOMIC DNA]</scope>
    <source>
        <strain>NIES-2133 / IAM M-273 / BP-1</strain>
    </source>
</reference>
<feature type="chain" id="PRO_0000134516" description="Deoxyhypusine synthase-like protein">
    <location>
        <begin position="1"/>
        <end position="401"/>
    </location>
</feature>
<comment type="similarity">
    <text evidence="1">Belongs to the deoxyhypusine synthase family.</text>
</comment>
<proteinExistence type="inferred from homology"/>